<name>NADE_LACJO</name>
<organism>
    <name type="scientific">Lactobacillus johnsonii (strain CNCM I-12250 / La1 / NCC 533)</name>
    <dbReference type="NCBI Taxonomy" id="257314"/>
    <lineage>
        <taxon>Bacteria</taxon>
        <taxon>Bacillati</taxon>
        <taxon>Bacillota</taxon>
        <taxon>Bacilli</taxon>
        <taxon>Lactobacillales</taxon>
        <taxon>Lactobacillaceae</taxon>
        <taxon>Lactobacillus</taxon>
    </lineage>
</organism>
<gene>
    <name evidence="1" type="primary">nadE</name>
    <name type="ordered locus">LJ_1733</name>
</gene>
<dbReference type="EC" id="6.3.1.5" evidence="1"/>
<dbReference type="EMBL" id="AE017198">
    <property type="protein sequence ID" value="AAS09504.1"/>
    <property type="molecule type" value="Genomic_DNA"/>
</dbReference>
<dbReference type="RefSeq" id="WP_011162408.1">
    <property type="nucleotide sequence ID" value="NC_005362.1"/>
</dbReference>
<dbReference type="SMR" id="Q74I36"/>
<dbReference type="GeneID" id="83570925"/>
<dbReference type="KEGG" id="ljo:LJ_1733"/>
<dbReference type="eggNOG" id="COG0171">
    <property type="taxonomic scope" value="Bacteria"/>
</dbReference>
<dbReference type="HOGENOM" id="CLU_059327_3_0_9"/>
<dbReference type="UniPathway" id="UPA00253">
    <property type="reaction ID" value="UER00333"/>
</dbReference>
<dbReference type="Proteomes" id="UP000000581">
    <property type="component" value="Chromosome"/>
</dbReference>
<dbReference type="GO" id="GO:0005737">
    <property type="term" value="C:cytoplasm"/>
    <property type="evidence" value="ECO:0007669"/>
    <property type="project" value="InterPro"/>
</dbReference>
<dbReference type="GO" id="GO:0005524">
    <property type="term" value="F:ATP binding"/>
    <property type="evidence" value="ECO:0007669"/>
    <property type="project" value="UniProtKB-UniRule"/>
</dbReference>
<dbReference type="GO" id="GO:0004359">
    <property type="term" value="F:glutaminase activity"/>
    <property type="evidence" value="ECO:0007669"/>
    <property type="project" value="InterPro"/>
</dbReference>
<dbReference type="GO" id="GO:0046872">
    <property type="term" value="F:metal ion binding"/>
    <property type="evidence" value="ECO:0007669"/>
    <property type="project" value="UniProtKB-KW"/>
</dbReference>
<dbReference type="GO" id="GO:0003952">
    <property type="term" value="F:NAD+ synthase (glutamine-hydrolyzing) activity"/>
    <property type="evidence" value="ECO:0007669"/>
    <property type="project" value="InterPro"/>
</dbReference>
<dbReference type="GO" id="GO:0008795">
    <property type="term" value="F:NAD+ synthase activity"/>
    <property type="evidence" value="ECO:0007669"/>
    <property type="project" value="UniProtKB-UniRule"/>
</dbReference>
<dbReference type="GO" id="GO:0009435">
    <property type="term" value="P:NAD biosynthetic process"/>
    <property type="evidence" value="ECO:0007669"/>
    <property type="project" value="UniProtKB-UniRule"/>
</dbReference>
<dbReference type="CDD" id="cd00553">
    <property type="entry name" value="NAD_synthase"/>
    <property type="match status" value="1"/>
</dbReference>
<dbReference type="FunFam" id="3.40.50.620:FF:000015">
    <property type="entry name" value="NH(3)-dependent NAD(+) synthetase"/>
    <property type="match status" value="1"/>
</dbReference>
<dbReference type="Gene3D" id="3.40.50.620">
    <property type="entry name" value="HUPs"/>
    <property type="match status" value="1"/>
</dbReference>
<dbReference type="HAMAP" id="MF_00193">
    <property type="entry name" value="NadE_ammonia_dep"/>
    <property type="match status" value="1"/>
</dbReference>
<dbReference type="InterPro" id="IPR022310">
    <property type="entry name" value="NAD/GMP_synthase"/>
</dbReference>
<dbReference type="InterPro" id="IPR003694">
    <property type="entry name" value="NAD_synthase"/>
</dbReference>
<dbReference type="InterPro" id="IPR022926">
    <property type="entry name" value="NH(3)-dep_NAD(+)_synth"/>
</dbReference>
<dbReference type="InterPro" id="IPR014729">
    <property type="entry name" value="Rossmann-like_a/b/a_fold"/>
</dbReference>
<dbReference type="NCBIfam" id="TIGR00552">
    <property type="entry name" value="nadE"/>
    <property type="match status" value="1"/>
</dbReference>
<dbReference type="NCBIfam" id="NF001979">
    <property type="entry name" value="PRK00768.1"/>
    <property type="match status" value="1"/>
</dbReference>
<dbReference type="PANTHER" id="PTHR23090">
    <property type="entry name" value="NH 3 /GLUTAMINE-DEPENDENT NAD + SYNTHETASE"/>
    <property type="match status" value="1"/>
</dbReference>
<dbReference type="PANTHER" id="PTHR23090:SF7">
    <property type="entry name" value="NH(3)-DEPENDENT NAD(+) SYNTHETASE"/>
    <property type="match status" value="1"/>
</dbReference>
<dbReference type="Pfam" id="PF02540">
    <property type="entry name" value="NAD_synthase"/>
    <property type="match status" value="1"/>
</dbReference>
<dbReference type="SUPFAM" id="SSF52402">
    <property type="entry name" value="Adenine nucleotide alpha hydrolases-like"/>
    <property type="match status" value="1"/>
</dbReference>
<reference key="1">
    <citation type="journal article" date="2004" name="Proc. Natl. Acad. Sci. U.S.A.">
        <title>The genome sequence of the probiotic intestinal bacterium Lactobacillus johnsonii NCC 533.</title>
        <authorList>
            <person name="Pridmore R.D."/>
            <person name="Berger B."/>
            <person name="Desiere F."/>
            <person name="Vilanova D."/>
            <person name="Barretto C."/>
            <person name="Pittet A.-C."/>
            <person name="Zwahlen M.-C."/>
            <person name="Rouvet M."/>
            <person name="Altermann E."/>
            <person name="Barrangou R."/>
            <person name="Mollet B."/>
            <person name="Mercenier A."/>
            <person name="Klaenhammer T."/>
            <person name="Arigoni F."/>
            <person name="Schell M.A."/>
        </authorList>
    </citation>
    <scope>NUCLEOTIDE SEQUENCE [LARGE SCALE GENOMIC DNA]</scope>
    <source>
        <strain>CNCM I-1225 / La1 / NCC 533</strain>
    </source>
</reference>
<accession>Q74I36</accession>
<feature type="chain" id="PRO_1000077565" description="NH(3)-dependent NAD(+) synthetase">
    <location>
        <begin position="1"/>
        <end position="277"/>
    </location>
</feature>
<feature type="binding site" evidence="1">
    <location>
        <begin position="47"/>
        <end position="54"/>
    </location>
    <ligand>
        <name>ATP</name>
        <dbReference type="ChEBI" id="CHEBI:30616"/>
    </ligand>
</feature>
<feature type="binding site" evidence="1">
    <location>
        <position position="53"/>
    </location>
    <ligand>
        <name>Mg(2+)</name>
        <dbReference type="ChEBI" id="CHEBI:18420"/>
    </ligand>
</feature>
<feature type="binding site" evidence="1">
    <location>
        <position position="141"/>
    </location>
    <ligand>
        <name>deamido-NAD(+)</name>
        <dbReference type="ChEBI" id="CHEBI:58437"/>
    </ligand>
</feature>
<feature type="binding site" evidence="1">
    <location>
        <position position="161"/>
    </location>
    <ligand>
        <name>ATP</name>
        <dbReference type="ChEBI" id="CHEBI:30616"/>
    </ligand>
</feature>
<feature type="binding site" evidence="1">
    <location>
        <position position="166"/>
    </location>
    <ligand>
        <name>Mg(2+)</name>
        <dbReference type="ChEBI" id="CHEBI:18420"/>
    </ligand>
</feature>
<feature type="binding site" evidence="1">
    <location>
        <position position="174"/>
    </location>
    <ligand>
        <name>deamido-NAD(+)</name>
        <dbReference type="ChEBI" id="CHEBI:58437"/>
    </ligand>
</feature>
<feature type="binding site" evidence="1">
    <location>
        <position position="181"/>
    </location>
    <ligand>
        <name>deamido-NAD(+)</name>
        <dbReference type="ChEBI" id="CHEBI:58437"/>
    </ligand>
</feature>
<feature type="binding site" evidence="1">
    <location>
        <position position="190"/>
    </location>
    <ligand>
        <name>ATP</name>
        <dbReference type="ChEBI" id="CHEBI:30616"/>
    </ligand>
</feature>
<feature type="binding site" evidence="1">
    <location>
        <position position="212"/>
    </location>
    <ligand>
        <name>ATP</name>
        <dbReference type="ChEBI" id="CHEBI:30616"/>
    </ligand>
</feature>
<feature type="binding site" evidence="1">
    <location>
        <begin position="261"/>
        <end position="262"/>
    </location>
    <ligand>
        <name>deamido-NAD(+)</name>
        <dbReference type="ChEBI" id="CHEBI:58437"/>
    </ligand>
</feature>
<sequence>MRPLQEKIVAYEHVLPEIDPKKEIRKSIDFLKDYLKENPFLKTYVLGISGGQDSTLTGKLCQMAIEEMREETGNKSYQFIAVRLPYGVQADASDAADAIAFQKPDQDLIVNIKEPVDAMVKVVEATGQKITDFNKGNIKARQRMVVQYAIAGANNGAVVGTDHAAENFSGFYTKYGDGAADITPLFRLDKRQGKAMLKELGCPKHLYEKAPTADLEEDRPDLPDEVALGVTYKDVDDYLEGKDVSEEAAEQIEKLWKKSEHKRHLPVTIFDDFYKQN</sequence>
<proteinExistence type="inferred from homology"/>
<keyword id="KW-0067">ATP-binding</keyword>
<keyword id="KW-0436">Ligase</keyword>
<keyword id="KW-0460">Magnesium</keyword>
<keyword id="KW-0479">Metal-binding</keyword>
<keyword id="KW-0520">NAD</keyword>
<keyword id="KW-0547">Nucleotide-binding</keyword>
<protein>
    <recommendedName>
        <fullName evidence="1">NH(3)-dependent NAD(+) synthetase</fullName>
        <ecNumber evidence="1">6.3.1.5</ecNumber>
    </recommendedName>
</protein>
<comment type="function">
    <text evidence="1">Catalyzes the ATP-dependent amidation of deamido-NAD to form NAD. Uses ammonia as a nitrogen source.</text>
</comment>
<comment type="catalytic activity">
    <reaction evidence="1">
        <text>deamido-NAD(+) + NH4(+) + ATP = AMP + diphosphate + NAD(+) + H(+)</text>
        <dbReference type="Rhea" id="RHEA:21188"/>
        <dbReference type="ChEBI" id="CHEBI:15378"/>
        <dbReference type="ChEBI" id="CHEBI:28938"/>
        <dbReference type="ChEBI" id="CHEBI:30616"/>
        <dbReference type="ChEBI" id="CHEBI:33019"/>
        <dbReference type="ChEBI" id="CHEBI:57540"/>
        <dbReference type="ChEBI" id="CHEBI:58437"/>
        <dbReference type="ChEBI" id="CHEBI:456215"/>
        <dbReference type="EC" id="6.3.1.5"/>
    </reaction>
</comment>
<comment type="pathway">
    <text evidence="1">Cofactor biosynthesis; NAD(+) biosynthesis; NAD(+) from deamido-NAD(+) (ammonia route): step 1/1.</text>
</comment>
<comment type="subunit">
    <text evidence="1">Homodimer.</text>
</comment>
<comment type="similarity">
    <text evidence="1">Belongs to the NAD synthetase family.</text>
</comment>
<evidence type="ECO:0000255" key="1">
    <source>
        <dbReference type="HAMAP-Rule" id="MF_00193"/>
    </source>
</evidence>